<organism>
    <name type="scientific">Halalkalibacterium halodurans (strain ATCC BAA-125 / DSM 18197 / FERM 7344 / JCM 9153 / C-125)</name>
    <name type="common">Bacillus halodurans</name>
    <dbReference type="NCBI Taxonomy" id="272558"/>
    <lineage>
        <taxon>Bacteria</taxon>
        <taxon>Bacillati</taxon>
        <taxon>Bacillota</taxon>
        <taxon>Bacilli</taxon>
        <taxon>Bacillales</taxon>
        <taxon>Bacillaceae</taxon>
        <taxon>Halalkalibacterium (ex Joshi et al. 2022)</taxon>
    </lineage>
</organism>
<evidence type="ECO:0000255" key="1">
    <source>
        <dbReference type="HAMAP-Rule" id="MF_00152"/>
    </source>
</evidence>
<keyword id="KW-0227">DNA damage</keyword>
<keyword id="KW-0234">DNA repair</keyword>
<keyword id="KW-0255">Endonuclease</keyword>
<keyword id="KW-0378">Hydrolase</keyword>
<keyword id="KW-0479">Metal-binding</keyword>
<keyword id="KW-0540">Nuclease</keyword>
<keyword id="KW-1185">Reference proteome</keyword>
<keyword id="KW-0862">Zinc</keyword>
<name>END4_HALH5</name>
<sequence length="298" mass="32998">MTLHLGSHVSMNGKKMLLGSSEEAISYGANTFMVYTGAPQNTRRKPIEELNIEAGRAHMKENGIDHIIVHAPYIINIGNSEKPATFKLGVDFLQSEIERTQALGADQIVLHPGAHVGAGVDKGIEKIIEGLNEVLTENDGVQIALETMAGKGSECGRTFEEIARIINGVTHNDRLSVCFDTCHTHDAGYNIVEDFDGVLNEFDKIIGVERIKVLHINDSKNPRGAAKDRHENIGFGHIGFKALHYIVHHPQLQDIPKILETPYVGEDKKNKKPPYKFEIDMIRNGTFHEGLLEKIVAQ</sequence>
<proteinExistence type="inferred from homology"/>
<gene>
    <name evidence="1" type="primary">nfo</name>
    <name type="ordered locus">BH1386</name>
</gene>
<reference key="1">
    <citation type="journal article" date="2000" name="Nucleic Acids Res.">
        <title>Complete genome sequence of the alkaliphilic bacterium Bacillus halodurans and genomic sequence comparison with Bacillus subtilis.</title>
        <authorList>
            <person name="Takami H."/>
            <person name="Nakasone K."/>
            <person name="Takaki Y."/>
            <person name="Maeno G."/>
            <person name="Sasaki R."/>
            <person name="Masui N."/>
            <person name="Fuji F."/>
            <person name="Hirama C."/>
            <person name="Nakamura Y."/>
            <person name="Ogasawara N."/>
            <person name="Kuhara S."/>
            <person name="Horikoshi K."/>
        </authorList>
    </citation>
    <scope>NUCLEOTIDE SEQUENCE [LARGE SCALE GENOMIC DNA]</scope>
    <source>
        <strain>ATCC BAA-125 / DSM 18197 / FERM 7344 / JCM 9153 / C-125</strain>
    </source>
</reference>
<comment type="function">
    <text evidence="1">Endonuclease IV plays a role in DNA repair. It cleaves phosphodiester bonds at apurinic or apyrimidinic (AP) sites, generating a 3'-hydroxyl group and a 5'-terminal sugar phosphate.</text>
</comment>
<comment type="catalytic activity">
    <reaction evidence="1">
        <text>Endonucleolytic cleavage to 5'-phosphooligonucleotide end-products.</text>
        <dbReference type="EC" id="3.1.21.2"/>
    </reaction>
</comment>
<comment type="cofactor">
    <cofactor evidence="1">
        <name>Zn(2+)</name>
        <dbReference type="ChEBI" id="CHEBI:29105"/>
    </cofactor>
    <text evidence="1">Binds 3 Zn(2+) ions.</text>
</comment>
<comment type="similarity">
    <text evidence="1">Belongs to the AP endonuclease 2 family.</text>
</comment>
<accession>Q9KD33</accession>
<dbReference type="EC" id="3.1.21.2" evidence="1"/>
<dbReference type="EMBL" id="BA000004">
    <property type="protein sequence ID" value="BAB05105.1"/>
    <property type="molecule type" value="Genomic_DNA"/>
</dbReference>
<dbReference type="PIR" id="B83823">
    <property type="entry name" value="B83823"/>
</dbReference>
<dbReference type="RefSeq" id="WP_010897551.1">
    <property type="nucleotide sequence ID" value="NC_002570.2"/>
</dbReference>
<dbReference type="SMR" id="Q9KD33"/>
<dbReference type="STRING" id="272558.gene:10727280"/>
<dbReference type="KEGG" id="bha:BH1386"/>
<dbReference type="eggNOG" id="COG0648">
    <property type="taxonomic scope" value="Bacteria"/>
</dbReference>
<dbReference type="HOGENOM" id="CLU_025885_4_1_9"/>
<dbReference type="OrthoDB" id="9805666at2"/>
<dbReference type="Proteomes" id="UP000001258">
    <property type="component" value="Chromosome"/>
</dbReference>
<dbReference type="GO" id="GO:0008833">
    <property type="term" value="F:deoxyribonuclease IV (phage-T4-induced) activity"/>
    <property type="evidence" value="ECO:0007669"/>
    <property type="project" value="UniProtKB-UniRule"/>
</dbReference>
<dbReference type="GO" id="GO:0003677">
    <property type="term" value="F:DNA binding"/>
    <property type="evidence" value="ECO:0007669"/>
    <property type="project" value="InterPro"/>
</dbReference>
<dbReference type="GO" id="GO:0003906">
    <property type="term" value="F:DNA-(apurinic or apyrimidinic site) endonuclease activity"/>
    <property type="evidence" value="ECO:0007669"/>
    <property type="project" value="TreeGrafter"/>
</dbReference>
<dbReference type="GO" id="GO:0008081">
    <property type="term" value="F:phosphoric diester hydrolase activity"/>
    <property type="evidence" value="ECO:0007669"/>
    <property type="project" value="TreeGrafter"/>
</dbReference>
<dbReference type="GO" id="GO:0008270">
    <property type="term" value="F:zinc ion binding"/>
    <property type="evidence" value="ECO:0007669"/>
    <property type="project" value="UniProtKB-UniRule"/>
</dbReference>
<dbReference type="GO" id="GO:0006284">
    <property type="term" value="P:base-excision repair"/>
    <property type="evidence" value="ECO:0007669"/>
    <property type="project" value="TreeGrafter"/>
</dbReference>
<dbReference type="CDD" id="cd00019">
    <property type="entry name" value="AP2Ec"/>
    <property type="match status" value="1"/>
</dbReference>
<dbReference type="FunFam" id="3.20.20.150:FF:000001">
    <property type="entry name" value="Probable endonuclease 4"/>
    <property type="match status" value="1"/>
</dbReference>
<dbReference type="Gene3D" id="3.20.20.150">
    <property type="entry name" value="Divalent-metal-dependent TIM barrel enzymes"/>
    <property type="match status" value="1"/>
</dbReference>
<dbReference type="HAMAP" id="MF_00152">
    <property type="entry name" value="Nfo"/>
    <property type="match status" value="1"/>
</dbReference>
<dbReference type="InterPro" id="IPR001719">
    <property type="entry name" value="AP_endonuc_2"/>
</dbReference>
<dbReference type="InterPro" id="IPR018246">
    <property type="entry name" value="AP_endonuc_F2_Zn_BS"/>
</dbReference>
<dbReference type="InterPro" id="IPR036237">
    <property type="entry name" value="Xyl_isomerase-like_sf"/>
</dbReference>
<dbReference type="InterPro" id="IPR013022">
    <property type="entry name" value="Xyl_isomerase-like_TIM-brl"/>
</dbReference>
<dbReference type="NCBIfam" id="TIGR00587">
    <property type="entry name" value="nfo"/>
    <property type="match status" value="1"/>
</dbReference>
<dbReference type="NCBIfam" id="NF002196">
    <property type="entry name" value="PRK01060.1-1"/>
    <property type="match status" value="1"/>
</dbReference>
<dbReference type="PANTHER" id="PTHR21445:SF0">
    <property type="entry name" value="APURINIC-APYRIMIDINIC ENDONUCLEASE"/>
    <property type="match status" value="1"/>
</dbReference>
<dbReference type="PANTHER" id="PTHR21445">
    <property type="entry name" value="ENDONUCLEASE IV ENDODEOXYRIBONUCLEASE IV"/>
    <property type="match status" value="1"/>
</dbReference>
<dbReference type="Pfam" id="PF01261">
    <property type="entry name" value="AP_endonuc_2"/>
    <property type="match status" value="1"/>
</dbReference>
<dbReference type="SMART" id="SM00518">
    <property type="entry name" value="AP2Ec"/>
    <property type="match status" value="1"/>
</dbReference>
<dbReference type="SUPFAM" id="SSF51658">
    <property type="entry name" value="Xylose isomerase-like"/>
    <property type="match status" value="1"/>
</dbReference>
<dbReference type="PROSITE" id="PS00729">
    <property type="entry name" value="AP_NUCLEASE_F2_1"/>
    <property type="match status" value="1"/>
</dbReference>
<dbReference type="PROSITE" id="PS00730">
    <property type="entry name" value="AP_NUCLEASE_F2_2"/>
    <property type="match status" value="1"/>
</dbReference>
<dbReference type="PROSITE" id="PS00731">
    <property type="entry name" value="AP_NUCLEASE_F2_3"/>
    <property type="match status" value="1"/>
</dbReference>
<dbReference type="PROSITE" id="PS51432">
    <property type="entry name" value="AP_NUCLEASE_F2_4"/>
    <property type="match status" value="1"/>
</dbReference>
<protein>
    <recommendedName>
        <fullName evidence="1">Probable endonuclease 4</fullName>
        <ecNumber evidence="1">3.1.21.2</ecNumber>
    </recommendedName>
    <alternativeName>
        <fullName evidence="1">Endodeoxyribonuclease IV</fullName>
    </alternativeName>
    <alternativeName>
        <fullName evidence="1">Endonuclease IV</fullName>
    </alternativeName>
</protein>
<feature type="chain" id="PRO_0000190822" description="Probable endonuclease 4">
    <location>
        <begin position="1"/>
        <end position="298"/>
    </location>
</feature>
<feature type="binding site" evidence="1">
    <location>
        <position position="70"/>
    </location>
    <ligand>
        <name>Zn(2+)</name>
        <dbReference type="ChEBI" id="CHEBI:29105"/>
        <label>1</label>
    </ligand>
</feature>
<feature type="binding site" evidence="1">
    <location>
        <position position="111"/>
    </location>
    <ligand>
        <name>Zn(2+)</name>
        <dbReference type="ChEBI" id="CHEBI:29105"/>
        <label>1</label>
    </ligand>
</feature>
<feature type="binding site" evidence="1">
    <location>
        <position position="146"/>
    </location>
    <ligand>
        <name>Zn(2+)</name>
        <dbReference type="ChEBI" id="CHEBI:29105"/>
        <label>1</label>
    </ligand>
</feature>
<feature type="binding site" evidence="1">
    <location>
        <position position="146"/>
    </location>
    <ligand>
        <name>Zn(2+)</name>
        <dbReference type="ChEBI" id="CHEBI:29105"/>
        <label>2</label>
    </ligand>
</feature>
<feature type="binding site" evidence="1">
    <location>
        <position position="180"/>
    </location>
    <ligand>
        <name>Zn(2+)</name>
        <dbReference type="ChEBI" id="CHEBI:29105"/>
        <label>2</label>
    </ligand>
</feature>
<feature type="binding site" evidence="1">
    <location>
        <position position="183"/>
    </location>
    <ligand>
        <name>Zn(2+)</name>
        <dbReference type="ChEBI" id="CHEBI:29105"/>
        <label>3</label>
    </ligand>
</feature>
<feature type="binding site" evidence="1">
    <location>
        <position position="215"/>
    </location>
    <ligand>
        <name>Zn(2+)</name>
        <dbReference type="ChEBI" id="CHEBI:29105"/>
        <label>2</label>
    </ligand>
</feature>
<feature type="binding site" evidence="1">
    <location>
        <position position="228"/>
    </location>
    <ligand>
        <name>Zn(2+)</name>
        <dbReference type="ChEBI" id="CHEBI:29105"/>
        <label>3</label>
    </ligand>
</feature>
<feature type="binding site" evidence="1">
    <location>
        <position position="230"/>
    </location>
    <ligand>
        <name>Zn(2+)</name>
        <dbReference type="ChEBI" id="CHEBI:29105"/>
        <label>3</label>
    </ligand>
</feature>
<feature type="binding site" evidence="1">
    <location>
        <position position="260"/>
    </location>
    <ligand>
        <name>Zn(2+)</name>
        <dbReference type="ChEBI" id="CHEBI:29105"/>
        <label>2</label>
    </ligand>
</feature>